<keyword id="KW-0002">3D-structure</keyword>
<keyword id="KW-0249">Electron transport</keyword>
<keyword id="KW-0472">Membrane</keyword>
<keyword id="KW-0496">Mitochondrion</keyword>
<keyword id="KW-0999">Mitochondrion inner membrane</keyword>
<keyword id="KW-1185">Reference proteome</keyword>
<keyword id="KW-0679">Respiratory chain</keyword>
<keyword id="KW-0813">Transport</keyword>
<comment type="function">
    <text evidence="1">Accessory subunit of the mitochondrial membrane respiratory chain NADH dehydrogenase (Complex I), that is believed to be not involved in catalysis. Complex I functions in the transfer of electrons from NADH to the respiratory chain. The immediate electron acceptor for the enzyme is believed to be ubiquinone (By similarity).</text>
</comment>
<comment type="subunit">
    <text>Complex I is composed of at least 49 different subunits.</text>
</comment>
<comment type="subcellular location">
    <subcellularLocation>
        <location evidence="1">Mitochondrion inner membrane</location>
        <topology evidence="1">Peripheral membrane protein</topology>
        <orientation evidence="1">Matrix side</orientation>
    </subcellularLocation>
</comment>
<comment type="similarity">
    <text evidence="2">Belongs to the complex I LYR family.</text>
</comment>
<proteinExistence type="evidence at protein level"/>
<reference key="1">
    <citation type="journal article" date="2000" name="DNA Res.">
        <title>Structural analysis of Arabidopsis thaliana chromosome 3. II. Sequence features of the 4,251,695 bp regions covered by 90 P1, TAC and BAC clones.</title>
        <authorList>
            <person name="Kaneko T."/>
            <person name="Katoh T."/>
            <person name="Sato S."/>
            <person name="Nakamura Y."/>
            <person name="Asamizu E."/>
            <person name="Tabata S."/>
        </authorList>
    </citation>
    <scope>NUCLEOTIDE SEQUENCE [LARGE SCALE GENOMIC DNA]</scope>
    <source>
        <strain>cv. Columbia</strain>
    </source>
</reference>
<reference key="2">
    <citation type="journal article" date="2000" name="Nature">
        <title>Sequence and analysis of chromosome 3 of the plant Arabidopsis thaliana.</title>
        <authorList>
            <person name="Salanoubat M."/>
            <person name="Lemcke K."/>
            <person name="Rieger M."/>
            <person name="Ansorge W."/>
            <person name="Unseld M."/>
            <person name="Fartmann B."/>
            <person name="Valle G."/>
            <person name="Bloecker H."/>
            <person name="Perez-Alonso M."/>
            <person name="Obermaier B."/>
            <person name="Delseny M."/>
            <person name="Boutry M."/>
            <person name="Grivell L.A."/>
            <person name="Mache R."/>
            <person name="Puigdomenech P."/>
            <person name="De Simone V."/>
            <person name="Choisne N."/>
            <person name="Artiguenave F."/>
            <person name="Robert C."/>
            <person name="Brottier P."/>
            <person name="Wincker P."/>
            <person name="Cattolico L."/>
            <person name="Weissenbach J."/>
            <person name="Saurin W."/>
            <person name="Quetier F."/>
            <person name="Schaefer M."/>
            <person name="Mueller-Auer S."/>
            <person name="Gabel C."/>
            <person name="Fuchs M."/>
            <person name="Benes V."/>
            <person name="Wurmbach E."/>
            <person name="Drzonek H."/>
            <person name="Erfle H."/>
            <person name="Jordan N."/>
            <person name="Bangert S."/>
            <person name="Wiedelmann R."/>
            <person name="Kranz H."/>
            <person name="Voss H."/>
            <person name="Holland R."/>
            <person name="Brandt P."/>
            <person name="Nyakatura G."/>
            <person name="Vezzi A."/>
            <person name="D'Angelo M."/>
            <person name="Pallavicini A."/>
            <person name="Toppo S."/>
            <person name="Simionati B."/>
            <person name="Conrad A."/>
            <person name="Hornischer K."/>
            <person name="Kauer G."/>
            <person name="Loehnert T.-H."/>
            <person name="Nordsiek G."/>
            <person name="Reichelt J."/>
            <person name="Scharfe M."/>
            <person name="Schoen O."/>
            <person name="Bargues M."/>
            <person name="Terol J."/>
            <person name="Climent J."/>
            <person name="Navarro P."/>
            <person name="Collado C."/>
            <person name="Perez-Perez A."/>
            <person name="Ottenwaelder B."/>
            <person name="Duchemin D."/>
            <person name="Cooke R."/>
            <person name="Laudie M."/>
            <person name="Berger-Llauro C."/>
            <person name="Purnelle B."/>
            <person name="Masuy D."/>
            <person name="de Haan M."/>
            <person name="Maarse A.C."/>
            <person name="Alcaraz J.-P."/>
            <person name="Cottet A."/>
            <person name="Casacuberta E."/>
            <person name="Monfort A."/>
            <person name="Argiriou A."/>
            <person name="Flores M."/>
            <person name="Liguori R."/>
            <person name="Vitale D."/>
            <person name="Mannhaupt G."/>
            <person name="Haase D."/>
            <person name="Schoof H."/>
            <person name="Rudd S."/>
            <person name="Zaccaria P."/>
            <person name="Mewes H.-W."/>
            <person name="Mayer K.F.X."/>
            <person name="Kaul S."/>
            <person name="Town C.D."/>
            <person name="Koo H.L."/>
            <person name="Tallon L.J."/>
            <person name="Jenkins J."/>
            <person name="Rooney T."/>
            <person name="Rizzo M."/>
            <person name="Walts A."/>
            <person name="Utterback T."/>
            <person name="Fujii C.Y."/>
            <person name="Shea T.P."/>
            <person name="Creasy T.H."/>
            <person name="Haas B."/>
            <person name="Maiti R."/>
            <person name="Wu D."/>
            <person name="Peterson J."/>
            <person name="Van Aken S."/>
            <person name="Pai G."/>
            <person name="Militscher J."/>
            <person name="Sellers P."/>
            <person name="Gill J.E."/>
            <person name="Feldblyum T.V."/>
            <person name="Preuss D."/>
            <person name="Lin X."/>
            <person name="Nierman W.C."/>
            <person name="Salzberg S.L."/>
            <person name="White O."/>
            <person name="Venter J.C."/>
            <person name="Fraser C.M."/>
            <person name="Kaneko T."/>
            <person name="Nakamura Y."/>
            <person name="Sato S."/>
            <person name="Kato T."/>
            <person name="Asamizu E."/>
            <person name="Sasamoto S."/>
            <person name="Kimura T."/>
            <person name="Idesawa K."/>
            <person name="Kawashima K."/>
            <person name="Kishida Y."/>
            <person name="Kiyokawa C."/>
            <person name="Kohara M."/>
            <person name="Matsumoto M."/>
            <person name="Matsuno A."/>
            <person name="Muraki A."/>
            <person name="Nakayama S."/>
            <person name="Nakazaki N."/>
            <person name="Shinpo S."/>
            <person name="Takeuchi C."/>
            <person name="Wada T."/>
            <person name="Watanabe A."/>
            <person name="Yamada M."/>
            <person name="Yasuda M."/>
            <person name="Tabata S."/>
        </authorList>
    </citation>
    <scope>NUCLEOTIDE SEQUENCE [LARGE SCALE GENOMIC DNA]</scope>
    <source>
        <strain>cv. Columbia</strain>
    </source>
</reference>
<reference key="3">
    <citation type="journal article" date="2017" name="Plant J.">
        <title>Araport11: a complete reannotation of the Arabidopsis thaliana reference genome.</title>
        <authorList>
            <person name="Cheng C.Y."/>
            <person name="Krishnakumar V."/>
            <person name="Chan A.P."/>
            <person name="Thibaud-Nissen F."/>
            <person name="Schobel S."/>
            <person name="Town C.D."/>
        </authorList>
    </citation>
    <scope>GENOME REANNOTATION</scope>
    <source>
        <strain>cv. Columbia</strain>
    </source>
</reference>
<reference key="4">
    <citation type="journal article" date="2003" name="Science">
        <title>Empirical analysis of transcriptional activity in the Arabidopsis genome.</title>
        <authorList>
            <person name="Yamada K."/>
            <person name="Lim J."/>
            <person name="Dale J.M."/>
            <person name="Chen H."/>
            <person name="Shinn P."/>
            <person name="Palm C.J."/>
            <person name="Southwick A.M."/>
            <person name="Wu H.C."/>
            <person name="Kim C.J."/>
            <person name="Nguyen M."/>
            <person name="Pham P.K."/>
            <person name="Cheuk R.F."/>
            <person name="Karlin-Newmann G."/>
            <person name="Liu S.X."/>
            <person name="Lam B."/>
            <person name="Sakano H."/>
            <person name="Wu T."/>
            <person name="Yu G."/>
            <person name="Miranda M."/>
            <person name="Quach H.L."/>
            <person name="Tripp M."/>
            <person name="Chang C.H."/>
            <person name="Lee J.M."/>
            <person name="Toriumi M.J."/>
            <person name="Chan M.M."/>
            <person name="Tang C.C."/>
            <person name="Onodera C.S."/>
            <person name="Deng J.M."/>
            <person name="Akiyama K."/>
            <person name="Ansari Y."/>
            <person name="Arakawa T."/>
            <person name="Banh J."/>
            <person name="Banno F."/>
            <person name="Bowser L."/>
            <person name="Brooks S.Y."/>
            <person name="Carninci P."/>
            <person name="Chao Q."/>
            <person name="Choy N."/>
            <person name="Enju A."/>
            <person name="Goldsmith A.D."/>
            <person name="Gurjal M."/>
            <person name="Hansen N.F."/>
            <person name="Hayashizaki Y."/>
            <person name="Johnson-Hopson C."/>
            <person name="Hsuan V.W."/>
            <person name="Iida K."/>
            <person name="Karnes M."/>
            <person name="Khan S."/>
            <person name="Koesema E."/>
            <person name="Ishida J."/>
            <person name="Jiang P.X."/>
            <person name="Jones T."/>
            <person name="Kawai J."/>
            <person name="Kamiya A."/>
            <person name="Meyers C."/>
            <person name="Nakajima M."/>
            <person name="Narusaka M."/>
            <person name="Seki M."/>
            <person name="Sakurai T."/>
            <person name="Satou M."/>
            <person name="Tamse R."/>
            <person name="Vaysberg M."/>
            <person name="Wallender E.K."/>
            <person name="Wong C."/>
            <person name="Yamamura Y."/>
            <person name="Yuan S."/>
            <person name="Shinozaki K."/>
            <person name="Davis R.W."/>
            <person name="Theologis A."/>
            <person name="Ecker J.R."/>
        </authorList>
    </citation>
    <scope>NUCLEOTIDE SEQUENCE [LARGE SCALE MRNA]</scope>
    <source>
        <strain>cv. Columbia</strain>
    </source>
</reference>
<protein>
    <recommendedName>
        <fullName>NADH dehydrogenase [ubiquinone] 1 alpha subcomplex subunit 6</fullName>
    </recommendedName>
</protein>
<evidence type="ECO:0000250" key="1"/>
<evidence type="ECO:0000305" key="2"/>
<evidence type="ECO:0007829" key="3">
    <source>
        <dbReference type="PDB" id="8BED"/>
    </source>
</evidence>
<evidence type="ECO:0007829" key="4">
    <source>
        <dbReference type="PDB" id="8BEE"/>
    </source>
</evidence>
<feature type="chain" id="PRO_0000410929" description="NADH dehydrogenase [ubiquinone] 1 alpha subcomplex subunit 6">
    <location>
        <begin position="1"/>
        <end position="133"/>
    </location>
</feature>
<feature type="helix" evidence="4">
    <location>
        <begin position="19"/>
        <end position="35"/>
    </location>
</feature>
<feature type="helix" evidence="4">
    <location>
        <begin position="37"/>
        <end position="44"/>
    </location>
</feature>
<feature type="turn" evidence="4">
    <location>
        <begin position="47"/>
        <end position="49"/>
    </location>
</feature>
<feature type="helix" evidence="4">
    <location>
        <begin position="52"/>
        <end position="65"/>
    </location>
</feature>
<feature type="turn" evidence="4">
    <location>
        <begin position="66"/>
        <end position="68"/>
    </location>
</feature>
<feature type="helix" evidence="4">
    <location>
        <begin position="72"/>
        <end position="91"/>
    </location>
</feature>
<feature type="strand" evidence="4">
    <location>
        <begin position="97"/>
        <end position="100"/>
    </location>
</feature>
<feature type="helix" evidence="3">
    <location>
        <begin position="122"/>
        <end position="129"/>
    </location>
</feature>
<organism>
    <name type="scientific">Arabidopsis thaliana</name>
    <name type="common">Mouse-ear cress</name>
    <dbReference type="NCBI Taxonomy" id="3702"/>
    <lineage>
        <taxon>Eukaryota</taxon>
        <taxon>Viridiplantae</taxon>
        <taxon>Streptophyta</taxon>
        <taxon>Embryophyta</taxon>
        <taxon>Tracheophyta</taxon>
        <taxon>Spermatophyta</taxon>
        <taxon>Magnoliopsida</taxon>
        <taxon>eudicotyledons</taxon>
        <taxon>Gunneridae</taxon>
        <taxon>Pentapetalae</taxon>
        <taxon>rosids</taxon>
        <taxon>malvids</taxon>
        <taxon>Brassicales</taxon>
        <taxon>Brassicaceae</taxon>
        <taxon>Camelineae</taxon>
        <taxon>Arabidopsis</taxon>
    </lineage>
</organism>
<gene>
    <name type="ordered locus">At3g12260</name>
    <name type="ORF">F28J15.12</name>
    <name type="ORF">MQC3.9</name>
</gene>
<sequence>MAAPFALRKIGVPPNSANLTEARRRVFDFFRAACRSIPTIMDIYNLQDVVAPSQLRYAISAQIRNNAHITDPKVIDLLIFKGMEELTDIVDHAKQRHHIIGQYVVGEGLVQNTGNKDQGKTDFLKNFYTSNYF</sequence>
<name>NDUA6_ARATH</name>
<accession>Q9LHI0</accession>
<dbReference type="EMBL" id="AP002047">
    <property type="protein sequence ID" value="BAB03135.1"/>
    <property type="molecule type" value="Genomic_DNA"/>
</dbReference>
<dbReference type="EMBL" id="AC069472">
    <property type="protein sequence ID" value="AAG51074.1"/>
    <property type="molecule type" value="Genomic_DNA"/>
</dbReference>
<dbReference type="EMBL" id="CP002686">
    <property type="protein sequence ID" value="AEE75177.1"/>
    <property type="molecule type" value="Genomic_DNA"/>
</dbReference>
<dbReference type="EMBL" id="AY054576">
    <property type="protein sequence ID" value="AAK96767.1"/>
    <property type="molecule type" value="mRNA"/>
</dbReference>
<dbReference type="EMBL" id="AY064675">
    <property type="protein sequence ID" value="AAL47381.1"/>
    <property type="molecule type" value="mRNA"/>
</dbReference>
<dbReference type="RefSeq" id="NP_566416.1">
    <property type="nucleotide sequence ID" value="NM_112062.4"/>
</dbReference>
<dbReference type="PDB" id="7A23">
    <property type="method" value="EM"/>
    <property type="resolution" value="3.70 A"/>
    <property type="chains" value="X=1-133"/>
</dbReference>
<dbReference type="PDB" id="7A24">
    <property type="method" value="EM"/>
    <property type="resolution" value="3.80 A"/>
    <property type="chains" value="X=1-133"/>
</dbReference>
<dbReference type="PDB" id="7AQR">
    <property type="method" value="EM"/>
    <property type="resolution" value="2.91 A"/>
    <property type="chains" value="W=1-133"/>
</dbReference>
<dbReference type="PDB" id="7AR7">
    <property type="method" value="EM"/>
    <property type="resolution" value="3.72 A"/>
    <property type="chains" value="W=1-133"/>
</dbReference>
<dbReference type="PDB" id="7AR8">
    <property type="method" value="EM"/>
    <property type="resolution" value="3.53 A"/>
    <property type="chains" value="W=1-133"/>
</dbReference>
<dbReference type="PDB" id="7ARB">
    <property type="method" value="EM"/>
    <property type="resolution" value="3.41 A"/>
    <property type="chains" value="W=1-133"/>
</dbReference>
<dbReference type="PDB" id="8BED">
    <property type="method" value="EM"/>
    <property type="resolution" value="2.03 A"/>
    <property type="chains" value="W=1-133"/>
</dbReference>
<dbReference type="PDB" id="8BEE">
    <property type="method" value="EM"/>
    <property type="resolution" value="2.04 A"/>
    <property type="chains" value="W=1-133"/>
</dbReference>
<dbReference type="PDB" id="8BPX">
    <property type="method" value="EM"/>
    <property type="resolution" value="2.09 A"/>
    <property type="chains" value="W=1-133"/>
</dbReference>
<dbReference type="PDB" id="8BQ5">
    <property type="method" value="EM"/>
    <property type="resolution" value="2.73 A"/>
    <property type="chains" value="W=1-133"/>
</dbReference>
<dbReference type="PDB" id="8BQ6">
    <property type="method" value="EM"/>
    <property type="resolution" value="2.80 A"/>
    <property type="chains" value="W=1-133"/>
</dbReference>
<dbReference type="PDBsum" id="7A23"/>
<dbReference type="PDBsum" id="7A24"/>
<dbReference type="PDBsum" id="7AQR"/>
<dbReference type="PDBsum" id="7AR7"/>
<dbReference type="PDBsum" id="7AR8"/>
<dbReference type="PDBsum" id="7ARB"/>
<dbReference type="PDBsum" id="8BED"/>
<dbReference type="PDBsum" id="8BEE"/>
<dbReference type="PDBsum" id="8BPX"/>
<dbReference type="PDBsum" id="8BQ5"/>
<dbReference type="PDBsum" id="8BQ6"/>
<dbReference type="EMDB" id="EMD-11873"/>
<dbReference type="EMDB" id="EMD-11878"/>
<dbReference type="EMDB" id="EMD-15998"/>
<dbReference type="EMDB" id="EMD-15999"/>
<dbReference type="EMDB" id="EMD-16168"/>
<dbReference type="EMDB" id="EMD-16171"/>
<dbReference type="EMDB" id="EMD-16172"/>
<dbReference type="SMR" id="Q9LHI0"/>
<dbReference type="BioGRID" id="5740">
    <property type="interactions" value="1"/>
</dbReference>
<dbReference type="FunCoup" id="Q9LHI0">
    <property type="interactions" value="2863"/>
</dbReference>
<dbReference type="IntAct" id="Q9LHI0">
    <property type="interactions" value="2"/>
</dbReference>
<dbReference type="STRING" id="3702.Q9LHI0"/>
<dbReference type="TCDB" id="3.D.1.6.3">
    <property type="family name" value="the h+ or na+-translocating nadh dehydrogenase (ndh) family"/>
</dbReference>
<dbReference type="PaxDb" id="3702-AT3G12260.1"/>
<dbReference type="ProteomicsDB" id="251102"/>
<dbReference type="EnsemblPlants" id="AT3G12260.1">
    <property type="protein sequence ID" value="AT3G12260.1"/>
    <property type="gene ID" value="AT3G12260"/>
</dbReference>
<dbReference type="GeneID" id="820406"/>
<dbReference type="Gramene" id="AT3G12260.1">
    <property type="protein sequence ID" value="AT3G12260.1"/>
    <property type="gene ID" value="AT3G12260"/>
</dbReference>
<dbReference type="KEGG" id="ath:AT3G12260"/>
<dbReference type="Araport" id="AT3G12260"/>
<dbReference type="TAIR" id="AT3G12260"/>
<dbReference type="eggNOG" id="KOG3426">
    <property type="taxonomic scope" value="Eukaryota"/>
</dbReference>
<dbReference type="HOGENOM" id="CLU_111660_1_0_1"/>
<dbReference type="InParanoid" id="Q9LHI0"/>
<dbReference type="OMA" id="EICTLYA"/>
<dbReference type="OrthoDB" id="1072235at2759"/>
<dbReference type="PhylomeDB" id="Q9LHI0"/>
<dbReference type="BioCyc" id="ARA:AT3G12260-MONOMER"/>
<dbReference type="PRO" id="PR:Q9LHI0"/>
<dbReference type="Proteomes" id="UP000006548">
    <property type="component" value="Chromosome 3"/>
</dbReference>
<dbReference type="ExpressionAtlas" id="Q9LHI0">
    <property type="expression patterns" value="baseline and differential"/>
</dbReference>
<dbReference type="GO" id="GO:0005829">
    <property type="term" value="C:cytosol"/>
    <property type="evidence" value="ECO:0007005"/>
    <property type="project" value="TAIR"/>
</dbReference>
<dbReference type="GO" id="GO:0005743">
    <property type="term" value="C:mitochondrial inner membrane"/>
    <property type="evidence" value="ECO:0007669"/>
    <property type="project" value="UniProtKB-SubCell"/>
</dbReference>
<dbReference type="GO" id="GO:0005739">
    <property type="term" value="C:mitochondrion"/>
    <property type="evidence" value="ECO:0000314"/>
    <property type="project" value="TAIR"/>
</dbReference>
<dbReference type="GO" id="GO:0045271">
    <property type="term" value="C:respiratory chain complex I"/>
    <property type="evidence" value="ECO:0007669"/>
    <property type="project" value="InterPro"/>
</dbReference>
<dbReference type="CDD" id="cd20266">
    <property type="entry name" value="Complex1_LYR_NDUFA6_LYRM6"/>
    <property type="match status" value="1"/>
</dbReference>
<dbReference type="InterPro" id="IPR045299">
    <property type="entry name" value="Complex1_LYR_NDUFA6_LYRM6"/>
</dbReference>
<dbReference type="InterPro" id="IPR016488">
    <property type="entry name" value="NADH_Ub_cplx-1_asu_su-6"/>
</dbReference>
<dbReference type="PANTHER" id="PTHR12964:SF0">
    <property type="entry name" value="NADH DEHYDROGENASE [UBIQUINONE] 1 ALPHA SUBCOMPLEX SUBUNIT 6"/>
    <property type="match status" value="1"/>
</dbReference>
<dbReference type="PANTHER" id="PTHR12964">
    <property type="entry name" value="NADH-UBIQUINONE OXIDOREDUCTASE B14 SUBUNIT"/>
    <property type="match status" value="1"/>
</dbReference>